<protein>
    <recommendedName>
        <fullName evidence="1">Ribosomal silencing factor RsfS</fullName>
    </recommendedName>
</protein>
<name>IOJAP_PSEAB</name>
<gene>
    <name evidence="1" type="primary">rsfS</name>
    <name evidence="3" type="ordered locus">PA14_12030</name>
</gene>
<reference key="1">
    <citation type="journal article" date="2006" name="Genome Biol.">
        <title>Genomic analysis reveals that Pseudomonas aeruginosa virulence is combinatorial.</title>
        <authorList>
            <person name="Lee D.G."/>
            <person name="Urbach J.M."/>
            <person name="Wu G."/>
            <person name="Liberati N.T."/>
            <person name="Feinbaum R.L."/>
            <person name="Miyata S."/>
            <person name="Diggins L.T."/>
            <person name="He J."/>
            <person name="Saucier M."/>
            <person name="Deziel E."/>
            <person name="Friedman L."/>
            <person name="Li L."/>
            <person name="Grills G."/>
            <person name="Montgomery K."/>
            <person name="Kucherlapati R."/>
            <person name="Rahme L.G."/>
            <person name="Ausubel F.M."/>
        </authorList>
    </citation>
    <scope>NUCLEOTIDE SEQUENCE [LARGE SCALE GENOMIC DNA]</scope>
    <source>
        <strain>UCBPP-PA14</strain>
    </source>
</reference>
<reference key="2">
    <citation type="journal article" date="2014" name="Anal. Bioanal. Chem.">
        <title>Potential of liquid-isoelectric-focusing protein fractionation to improve phosphoprotein characterization of Pseudomonas aeruginosa PA14.</title>
        <authorList>
            <person name="Ouidir T."/>
            <person name="Jarnier F."/>
            <person name="Cosette P."/>
            <person name="Jouenne T."/>
            <person name="Hardouin J."/>
        </authorList>
    </citation>
    <scope>IDENTIFICATION BY MASS SPECTROMETRY</scope>
    <scope>PHOSPHORYLATION AT TYR-36</scope>
    <source>
        <strain>UCBPP-PA14</strain>
    </source>
</reference>
<feature type="chain" id="PRO_0000431473" description="Ribosomal silencing factor RsfS">
    <location>
        <begin position="1"/>
        <end position="118"/>
    </location>
</feature>
<feature type="modified residue" description="Phosphotyrosine" evidence="2">
    <location>
        <position position="36"/>
    </location>
</feature>
<dbReference type="EMBL" id="CP000438">
    <property type="protein sequence ID" value="ABJ13279.1"/>
    <property type="molecule type" value="Genomic_DNA"/>
</dbReference>
<dbReference type="RefSeq" id="WP_003100305.1">
    <property type="nucleotide sequence ID" value="NZ_CP034244.1"/>
</dbReference>
<dbReference type="SMR" id="Q02SH2"/>
<dbReference type="iPTMnet" id="Q02SH2"/>
<dbReference type="KEGG" id="pau:PA14_12030"/>
<dbReference type="PseudoCAP" id="PA14_12030"/>
<dbReference type="HOGENOM" id="CLU_092688_6_1_6"/>
<dbReference type="BioCyc" id="PAER208963:G1G74-999-MONOMER"/>
<dbReference type="Proteomes" id="UP000000653">
    <property type="component" value="Chromosome"/>
</dbReference>
<dbReference type="GO" id="GO:0005737">
    <property type="term" value="C:cytoplasm"/>
    <property type="evidence" value="ECO:0007669"/>
    <property type="project" value="UniProtKB-SubCell"/>
</dbReference>
<dbReference type="GO" id="GO:0043023">
    <property type="term" value="F:ribosomal large subunit binding"/>
    <property type="evidence" value="ECO:0007669"/>
    <property type="project" value="TreeGrafter"/>
</dbReference>
<dbReference type="GO" id="GO:0042256">
    <property type="term" value="P:cytosolic ribosome assembly"/>
    <property type="evidence" value="ECO:0007669"/>
    <property type="project" value="UniProtKB-UniRule"/>
</dbReference>
<dbReference type="GO" id="GO:0090071">
    <property type="term" value="P:negative regulation of ribosome biogenesis"/>
    <property type="evidence" value="ECO:0007669"/>
    <property type="project" value="UniProtKB-UniRule"/>
</dbReference>
<dbReference type="GO" id="GO:0017148">
    <property type="term" value="P:negative regulation of translation"/>
    <property type="evidence" value="ECO:0007669"/>
    <property type="project" value="UniProtKB-UniRule"/>
</dbReference>
<dbReference type="Gene3D" id="3.30.460.10">
    <property type="entry name" value="Beta Polymerase, domain 2"/>
    <property type="match status" value="1"/>
</dbReference>
<dbReference type="HAMAP" id="MF_01477">
    <property type="entry name" value="Iojap_RsfS"/>
    <property type="match status" value="1"/>
</dbReference>
<dbReference type="InterPro" id="IPR004394">
    <property type="entry name" value="Iojap/RsfS/C7orf30"/>
</dbReference>
<dbReference type="InterPro" id="IPR043519">
    <property type="entry name" value="NT_sf"/>
</dbReference>
<dbReference type="NCBIfam" id="TIGR00090">
    <property type="entry name" value="rsfS_iojap_ybeB"/>
    <property type="match status" value="1"/>
</dbReference>
<dbReference type="PANTHER" id="PTHR21043">
    <property type="entry name" value="IOJAP SUPERFAMILY ORTHOLOG"/>
    <property type="match status" value="1"/>
</dbReference>
<dbReference type="PANTHER" id="PTHR21043:SF0">
    <property type="entry name" value="MITOCHONDRIAL ASSEMBLY OF RIBOSOMAL LARGE SUBUNIT PROTEIN 1"/>
    <property type="match status" value="1"/>
</dbReference>
<dbReference type="Pfam" id="PF02410">
    <property type="entry name" value="RsfS"/>
    <property type="match status" value="1"/>
</dbReference>
<dbReference type="SUPFAM" id="SSF81301">
    <property type="entry name" value="Nucleotidyltransferase"/>
    <property type="match status" value="1"/>
</dbReference>
<keyword id="KW-0963">Cytoplasm</keyword>
<keyword id="KW-0597">Phosphoprotein</keyword>
<keyword id="KW-0678">Repressor</keyword>
<keyword id="KW-0810">Translation regulation</keyword>
<proteinExistence type="evidence at protein level"/>
<comment type="function">
    <text evidence="1">Functions as a ribosomal silencing factor. Interacts with ribosomal protein uL14 (rplN), blocking formation of intersubunit bridge B8. Prevents association of the 30S and 50S ribosomal subunits and the formation of functional ribosomes, thus repressing translation.</text>
</comment>
<comment type="subcellular location">
    <subcellularLocation>
        <location evidence="1">Cytoplasm</location>
    </subcellularLocation>
</comment>
<comment type="similarity">
    <text evidence="1">Belongs to the Iojap/RsfS family.</text>
</comment>
<organism>
    <name type="scientific">Pseudomonas aeruginosa (strain UCBPP-PA14)</name>
    <dbReference type="NCBI Taxonomy" id="208963"/>
    <lineage>
        <taxon>Bacteria</taxon>
        <taxon>Pseudomonadati</taxon>
        <taxon>Pseudomonadota</taxon>
        <taxon>Gammaproteobacteria</taxon>
        <taxon>Pseudomonadales</taxon>
        <taxon>Pseudomonadaceae</taxon>
        <taxon>Pseudomonas</taxon>
    </lineage>
</organism>
<evidence type="ECO:0000255" key="1">
    <source>
        <dbReference type="HAMAP-Rule" id="MF_01477"/>
    </source>
</evidence>
<evidence type="ECO:0000269" key="2">
    <source>
    </source>
</evidence>
<evidence type="ECO:0000312" key="3">
    <source>
        <dbReference type="EMBL" id="ABJ13279.1"/>
    </source>
</evidence>
<accession>Q02SH2</accession>
<sequence length="118" mass="13054">MQTEQLVQVAIDALEDLKAQDIVTLDVRDKTSVTDYMVIACGSSSRQVKSLADNVLTKAKENGVKPLGSEGLESGEWALLDLGDVVVHVMLPATRQFYDLERLWQGAEQSRAQHQPEE</sequence>